<keyword id="KW-0444">Lipid biosynthesis</keyword>
<keyword id="KW-0443">Lipid metabolism</keyword>
<keyword id="KW-0460">Magnesium</keyword>
<keyword id="KW-0479">Metal-binding</keyword>
<keyword id="KW-0594">Phospholipid biosynthesis</keyword>
<keyword id="KW-1208">Phospholipid metabolism</keyword>
<keyword id="KW-0808">Transferase</keyword>
<sequence length="249" mass="26410">MTILRDYKLSGRKAFAVLLDPDKVEQDAFSTLLQRTADYPVDFFLVGGSLVTDYAHKEVIATIRRYSSTPVILFPGNPLHIESSADAILLLSLISGRNADFLIGQHVIAAPLLKKSGLEILPTGYMVVDSGTQTTVSYISGTMPLPHDKPDVAACTALAGEMLGLQLMYLDAGSGARRPVSAAMIAAVRKAVNVPIIVGGGITSGEKAYEALKAGADMIVVGNGVEQDPDLLPQLATVVREFNQSVVQA</sequence>
<feature type="chain" id="PRO_0000436909" description="Geranylgeranylglyceryl phosphate synthase">
    <location>
        <begin position="1"/>
        <end position="249"/>
    </location>
</feature>
<feature type="binding site" evidence="1">
    <location>
        <position position="20"/>
    </location>
    <ligand>
        <name>Mg(2+)</name>
        <dbReference type="ChEBI" id="CHEBI:18420"/>
    </ligand>
</feature>
<feature type="binding site" evidence="1">
    <location>
        <position position="49"/>
    </location>
    <ligand>
        <name>Mg(2+)</name>
        <dbReference type="ChEBI" id="CHEBI:18420"/>
    </ligand>
</feature>
<feature type="binding site" evidence="1">
    <location>
        <begin position="169"/>
        <end position="175"/>
    </location>
    <ligand>
        <name>sn-glycerol 1-phosphate</name>
        <dbReference type="ChEBI" id="CHEBI:57685"/>
    </ligand>
</feature>
<feature type="binding site" evidence="1">
    <location>
        <begin position="200"/>
        <end position="201"/>
    </location>
    <ligand>
        <name>sn-glycerol 1-phosphate</name>
        <dbReference type="ChEBI" id="CHEBI:57685"/>
    </ligand>
</feature>
<feature type="binding site" evidence="1">
    <location>
        <begin position="222"/>
        <end position="223"/>
    </location>
    <ligand>
        <name>sn-glycerol 1-phosphate</name>
        <dbReference type="ChEBI" id="CHEBI:57685"/>
    </ligand>
</feature>
<evidence type="ECO:0000255" key="1">
    <source>
        <dbReference type="HAMAP-Rule" id="MF_00112"/>
    </source>
</evidence>
<evidence type="ECO:0000269" key="2">
    <source>
    </source>
</evidence>
<evidence type="ECO:0000312" key="3">
    <source>
        <dbReference type="EMBL" id="ADB41609.1"/>
    </source>
</evidence>
<evidence type="ECO:0000312" key="4">
    <source>
        <dbReference type="Proteomes" id="UP000002028"/>
    </source>
</evidence>
<comment type="function">
    <text evidence="1 2">Prenyltransferase that catalyzes the transfer of the geranylgeranyl moiety of geranylgeranyl diphosphate (GGPP) to the C3 hydroxyl of sn-glycerol-1-phosphate (G1P).</text>
</comment>
<comment type="catalytic activity">
    <reaction evidence="1 2">
        <text>sn-glycerol 1-phosphate + (2E,6E,10E)-geranylgeranyl diphosphate = sn-3-O-(geranylgeranyl)glycerol 1-phosphate + diphosphate</text>
        <dbReference type="Rhea" id="RHEA:23404"/>
        <dbReference type="ChEBI" id="CHEBI:33019"/>
        <dbReference type="ChEBI" id="CHEBI:57677"/>
        <dbReference type="ChEBI" id="CHEBI:57685"/>
        <dbReference type="ChEBI" id="CHEBI:58756"/>
        <dbReference type="EC" id="2.5.1.41"/>
    </reaction>
</comment>
<comment type="cofactor">
    <cofactor evidence="1">
        <name>Mg(2+)</name>
        <dbReference type="ChEBI" id="CHEBI:18420"/>
    </cofactor>
</comment>
<comment type="subunit">
    <text evidence="2">Homohexamer.</text>
</comment>
<comment type="similarity">
    <text evidence="1">Belongs to the GGGP/HepGP synthase family. Group II subfamily.</text>
</comment>
<accession>D2QS27</accession>
<dbReference type="EC" id="2.5.1.41" evidence="1 2"/>
<dbReference type="EMBL" id="CP001769">
    <property type="protein sequence ID" value="ADB41609.1"/>
    <property type="molecule type" value="Genomic_DNA"/>
</dbReference>
<dbReference type="SMR" id="D2QS27"/>
<dbReference type="STRING" id="504472.Slin_5644"/>
<dbReference type="KEGG" id="sli:Slin_5644"/>
<dbReference type="eggNOG" id="COG1646">
    <property type="taxonomic scope" value="Bacteria"/>
</dbReference>
<dbReference type="HOGENOM" id="CLU_068610_0_0_10"/>
<dbReference type="Proteomes" id="UP000002028">
    <property type="component" value="Chromosome"/>
</dbReference>
<dbReference type="GO" id="GO:0005737">
    <property type="term" value="C:cytoplasm"/>
    <property type="evidence" value="ECO:0007669"/>
    <property type="project" value="InterPro"/>
</dbReference>
<dbReference type="GO" id="GO:0000287">
    <property type="term" value="F:magnesium ion binding"/>
    <property type="evidence" value="ECO:0007669"/>
    <property type="project" value="UniProtKB-UniRule"/>
</dbReference>
<dbReference type="GO" id="GO:0047294">
    <property type="term" value="F:phosphoglycerol geranylgeranyltransferase activity"/>
    <property type="evidence" value="ECO:0007669"/>
    <property type="project" value="UniProtKB-UniRule"/>
</dbReference>
<dbReference type="GO" id="GO:0046474">
    <property type="term" value="P:glycerophospholipid biosynthetic process"/>
    <property type="evidence" value="ECO:0007669"/>
    <property type="project" value="UniProtKB-UniRule"/>
</dbReference>
<dbReference type="CDD" id="cd02812">
    <property type="entry name" value="PcrB_like"/>
    <property type="match status" value="1"/>
</dbReference>
<dbReference type="Gene3D" id="3.20.20.390">
    <property type="entry name" value="FMN-linked oxidoreductases"/>
    <property type="match status" value="1"/>
</dbReference>
<dbReference type="HAMAP" id="MF_00112">
    <property type="entry name" value="GGGP_HepGP_synthase"/>
    <property type="match status" value="1"/>
</dbReference>
<dbReference type="InterPro" id="IPR039074">
    <property type="entry name" value="GGGP/HepGP_synthase_I"/>
</dbReference>
<dbReference type="InterPro" id="IPR038597">
    <property type="entry name" value="GGGP/HepGP_synthase_sf"/>
</dbReference>
<dbReference type="InterPro" id="IPR008205">
    <property type="entry name" value="GGGP_HepGP_synthase"/>
</dbReference>
<dbReference type="InterPro" id="IPR010946">
    <property type="entry name" value="GGGP_synth"/>
</dbReference>
<dbReference type="NCBIfam" id="TIGR01769">
    <property type="entry name" value="GGGP"/>
    <property type="match status" value="1"/>
</dbReference>
<dbReference type="NCBIfam" id="TIGR01768">
    <property type="entry name" value="GGGP-family"/>
    <property type="match status" value="1"/>
</dbReference>
<dbReference type="NCBIfam" id="NF003198">
    <property type="entry name" value="PRK04169.1-2"/>
    <property type="match status" value="1"/>
</dbReference>
<dbReference type="PANTHER" id="PTHR40029">
    <property type="match status" value="1"/>
</dbReference>
<dbReference type="PANTHER" id="PTHR40029:SF2">
    <property type="entry name" value="HEPTAPRENYLGLYCERYL PHOSPHATE SYNTHASE"/>
    <property type="match status" value="1"/>
</dbReference>
<dbReference type="Pfam" id="PF01884">
    <property type="entry name" value="PcrB"/>
    <property type="match status" value="1"/>
</dbReference>
<dbReference type="SUPFAM" id="SSF51395">
    <property type="entry name" value="FMN-linked oxidoreductases"/>
    <property type="match status" value="1"/>
</dbReference>
<gene>
    <name evidence="3" type="ordered locus">Slin_5644</name>
</gene>
<name>GGGPS_SPILD</name>
<organism>
    <name type="scientific">Spirosoma linguale (strain ATCC 33905 / DSM 74 / LMG 10896 / Claus 1)</name>
    <dbReference type="NCBI Taxonomy" id="504472"/>
    <lineage>
        <taxon>Bacteria</taxon>
        <taxon>Pseudomonadati</taxon>
        <taxon>Bacteroidota</taxon>
        <taxon>Cytophagia</taxon>
        <taxon>Cytophagales</taxon>
        <taxon>Cytophagaceae</taxon>
        <taxon>Spirosoma</taxon>
    </lineage>
</organism>
<reference key="1">
    <citation type="submission" date="2009-09" db="EMBL/GenBank/DDBJ databases">
        <title>The complete chromosome of Spirosoma linguale DSM 74.</title>
        <authorList>
            <consortium name="US DOE Joint Genome Institute (JGI-PGF)"/>
            <person name="Lucas S."/>
            <person name="Copeland A."/>
            <person name="Lapidus A."/>
            <person name="Glavina del Rio T."/>
            <person name="Dalin E."/>
            <person name="Tice H."/>
            <person name="Bruce D."/>
            <person name="Goodwin L."/>
            <person name="Pitluck S."/>
            <person name="Kyrpides N."/>
            <person name="Mavromatis K."/>
            <person name="Mikhailova N."/>
            <person name="Ovchinnikova G."/>
            <person name="Saunders E."/>
            <person name="Brettin T."/>
            <person name="Detter J.C."/>
            <person name="Han C."/>
            <person name="Larimer F."/>
            <person name="Land M."/>
            <person name="Hauser L."/>
            <person name="Markowitz V."/>
            <person name="Cheng J.-F."/>
            <person name="Hugenholtz P."/>
            <person name="Woyke T."/>
            <person name="Wu D."/>
            <person name="Tindal B."/>
            <person name="Schutze A."/>
            <person name="Schneider S."/>
            <person name="Goker M."/>
            <person name="Klenk H.-P."/>
            <person name="Eisen J.A."/>
        </authorList>
    </citation>
    <scope>NUCLEOTIDE SEQUENCE [LARGE SCALE GENOMIC DNA]</scope>
    <source>
        <strain evidence="4">ATCC 33905 / DSM 74 / LMG 10896 / Claus 1</strain>
    </source>
</reference>
<reference key="2">
    <citation type="journal article" date="2014" name="Mol. Microbiol.">
        <title>A comprehensive analysis of the geranylgeranylglyceryl phosphate synthase enzyme family identifies novel members and reveals mechanisms of substrate specificity and quaternary structure organization.</title>
        <authorList>
            <person name="Peterhoff D."/>
            <person name="Beer B."/>
            <person name="Rajendran C."/>
            <person name="Kumpula E.P."/>
            <person name="Kapetaniou E."/>
            <person name="Guldan H."/>
            <person name="Wierenga R.K."/>
            <person name="Sterner R."/>
            <person name="Babinger P."/>
        </authorList>
    </citation>
    <scope>FUNCTION</scope>
    <scope>CATALYTIC ACTIVITY</scope>
    <scope>SUBUNIT</scope>
</reference>
<protein>
    <recommendedName>
        <fullName evidence="1">Geranylgeranylglyceryl phosphate synthase</fullName>
        <shortName evidence="1">GGGP synthase</shortName>
        <shortName evidence="1">GGGPS</shortName>
        <ecNumber evidence="1 2">2.5.1.41</ecNumber>
    </recommendedName>
    <alternativeName>
        <fullName evidence="1">(S)-3-O-geranylgeranylglyceryl phosphate synthase</fullName>
    </alternativeName>
    <alternativeName>
        <fullName evidence="1">Phosphoglycerol geranylgeranyltransferase</fullName>
    </alternativeName>
</protein>
<proteinExistence type="evidence at protein level"/>